<evidence type="ECO:0000250" key="1">
    <source>
        <dbReference type="UniProtKB" id="P0AAN3"/>
    </source>
</evidence>
<evidence type="ECO:0000269" key="2">
    <source>
    </source>
</evidence>
<evidence type="ECO:0000269" key="3">
    <source>
    </source>
</evidence>
<evidence type="ECO:0000269" key="4">
    <source>
    </source>
</evidence>
<evidence type="ECO:0000269" key="5">
    <source>
    </source>
</evidence>
<evidence type="ECO:0000269" key="6">
    <source>
    </source>
</evidence>
<evidence type="ECO:0000269" key="7">
    <source>
    </source>
</evidence>
<evidence type="ECO:0000305" key="8"/>
<evidence type="ECO:0000305" key="9">
    <source>
    </source>
</evidence>
<evidence type="ECO:0000305" key="10">
    <source>
    </source>
</evidence>
<evidence type="ECO:0000305" key="11">
    <source>
    </source>
</evidence>
<evidence type="ECO:0000305" key="12">
    <source>
    </source>
</evidence>
<evidence type="ECO:0007744" key="13">
    <source>
        <dbReference type="PDB" id="4LPS"/>
    </source>
</evidence>
<evidence type="ECO:0007829" key="14">
    <source>
        <dbReference type="PDB" id="4LPS"/>
    </source>
</evidence>
<protein>
    <recommendedName>
        <fullName evidence="8">Hydrogenase/urease maturation factor HypB</fullName>
    </recommendedName>
    <alternativeName>
        <fullName evidence="8">Hydrogenase/urease nickel incorporation protein HypB</fullName>
    </alternativeName>
</protein>
<sequence length="242" mass="27310">MSEQRQESLQNNPNLSKKDVKIVEKILSKNDIKAAEMKERYLKEGLYVLNFMSSPGSGKTTMLENLADFKDFKFCVVEGDLQTNRDADRLRKKGVSAHQITTGEACHLEASMIEGAFDLLKDEGALEKSDFLIIENVGNLVCPSSYNLGAAMNIVLLSVPEGDDKVLKYPTMFMCADAVIISKADMVEVFNFRVSQVKEDMQKLKPEAPIFLMSSKDPKSLEDFKNFLLEKKRENYQSTHSF</sequence>
<proteinExistence type="evidence at protein level"/>
<feature type="chain" id="PRO_0000201442" description="Hydrogenase/urease maturation factor HypB">
    <location>
        <begin position="1"/>
        <end position="242"/>
    </location>
</feature>
<feature type="region of interest" description="G-domain" evidence="1">
    <location>
        <begin position="48"/>
        <end position="211"/>
    </location>
</feature>
<feature type="binding site" evidence="7 11 13">
    <location>
        <position position="106"/>
    </location>
    <ligand>
        <name>Ni(2+)</name>
        <dbReference type="ChEBI" id="CHEBI:49786"/>
    </ligand>
</feature>
<feature type="binding site" evidence="11">
    <location>
        <position position="106"/>
    </location>
    <ligand>
        <name>Zn(2+)</name>
        <dbReference type="ChEBI" id="CHEBI:29105"/>
    </ligand>
</feature>
<feature type="binding site" evidence="11 12">
    <location>
        <position position="107"/>
    </location>
    <ligand>
        <name>Ni(2+)</name>
        <dbReference type="ChEBI" id="CHEBI:49786"/>
    </ligand>
</feature>
<feature type="binding site" evidence="7 11 13">
    <location>
        <position position="142"/>
    </location>
    <ligand>
        <name>Ni(2+)</name>
        <dbReference type="ChEBI" id="CHEBI:49786"/>
    </ligand>
</feature>
<feature type="binding site" evidence="11">
    <location>
        <position position="142"/>
    </location>
    <ligand>
        <name>Zn(2+)</name>
        <dbReference type="ChEBI" id="CHEBI:29105"/>
    </ligand>
</feature>
<feature type="mutagenesis site" description="Decreases interaction with HypA." evidence="6">
    <original>K</original>
    <variation>A</variation>
    <location>
        <position position="18"/>
    </location>
</feature>
<feature type="mutagenesis site" description="Decreases interaction with HypA." evidence="6">
    <original>V</original>
    <variation>A</variation>
    <location>
        <position position="20"/>
    </location>
</feature>
<feature type="mutagenesis site" description="Does not affect interaction with HypA." evidence="6">
    <original>K</original>
    <variation>A</variation>
    <location>
        <position position="21"/>
    </location>
</feature>
<feature type="mutagenesis site" description="Decreases interaction with HypA." evidence="6">
    <original>I</original>
    <variation>A</variation>
    <location>
        <position position="22"/>
    </location>
</feature>
<feature type="mutagenesis site" description="No hydrogenase activity, 1% urease activity. Normal amounts of apo-urease and HypB protein are produced. Hydrogenase activity is partially restored and urease activity is fully restored by growth on 5 uM Ni(2+). Almost loss of GTPase activity." evidence="3 4">
    <original>K</original>
    <variation>A</variation>
    <location>
        <position position="59"/>
    </location>
</feature>
<feature type="mutagenesis site" description="Abrogates nickel binding and weakens the affinity for zinc. Cannot dimerize in the presence of nickel." evidence="5">
    <original>CH</original>
    <variation>AA</variation>
    <location>
        <begin position="106"/>
        <end position="107"/>
    </location>
</feature>
<feature type="mutagenesis site" description="Strong decrease in nickel affinity in the absence of nucleotide." evidence="7">
    <original>H</original>
    <variation>A</variation>
    <location>
        <position position="107"/>
    </location>
</feature>
<feature type="mutagenesis site" description="Weakens metal binding and decouples the GTPase and metal binding activities." evidence="7">
    <original>C</original>
    <variation>S</variation>
    <location>
        <position position="142"/>
    </location>
</feature>
<feature type="mutagenesis site" description="Abolishes GTP-dependent dimerization, but does not affect nickel-dependent dimerization. Loss of GTPase activity." evidence="6">
    <original>K</original>
    <variation>A</variation>
    <location>
        <position position="168"/>
    </location>
</feature>
<feature type="mutagenesis site" description="Strong decrease in GTP-dependent dimerization, but does not affect nickel-dependent dimerization; when associated with V-190." evidence="6">
    <original>M</original>
    <variation>L</variation>
    <location>
        <position position="186"/>
    </location>
</feature>
<feature type="mutagenesis site" description="Strong decrease in GTP-dependent dimerization, but does not affect nickel-dependent dimerization; when associated with L-186." evidence="6">
    <original>F</original>
    <variation>V</variation>
    <location>
        <position position="190"/>
    </location>
</feature>
<feature type="helix" evidence="14">
    <location>
        <begin position="29"/>
        <end position="43"/>
    </location>
</feature>
<feature type="strand" evidence="14">
    <location>
        <begin position="47"/>
        <end position="52"/>
    </location>
</feature>
<feature type="helix" evidence="14">
    <location>
        <begin position="59"/>
        <end position="66"/>
    </location>
</feature>
<feature type="strand" evidence="14">
    <location>
        <begin position="74"/>
        <end position="82"/>
    </location>
</feature>
<feature type="helix" evidence="14">
    <location>
        <begin position="85"/>
        <end position="91"/>
    </location>
</feature>
<feature type="turn" evidence="14">
    <location>
        <begin position="92"/>
        <end position="94"/>
    </location>
</feature>
<feature type="strand" evidence="14">
    <location>
        <begin position="97"/>
        <end position="101"/>
    </location>
</feature>
<feature type="helix" evidence="14">
    <location>
        <begin position="110"/>
        <end position="122"/>
    </location>
</feature>
<feature type="turn" evidence="14">
    <location>
        <begin position="123"/>
        <end position="128"/>
    </location>
</feature>
<feature type="strand" evidence="14">
    <location>
        <begin position="130"/>
        <end position="135"/>
    </location>
</feature>
<feature type="helix" evidence="14">
    <location>
        <begin position="142"/>
        <end position="145"/>
    </location>
</feature>
<feature type="strand" evidence="14">
    <location>
        <begin position="151"/>
        <end position="158"/>
    </location>
</feature>
<feature type="helix" evidence="14">
    <location>
        <begin position="159"/>
        <end position="161"/>
    </location>
</feature>
<feature type="helix" evidence="14">
    <location>
        <begin position="165"/>
        <end position="168"/>
    </location>
</feature>
<feature type="helix" evidence="14">
    <location>
        <begin position="170"/>
        <end position="174"/>
    </location>
</feature>
<feature type="strand" evidence="14">
    <location>
        <begin position="177"/>
        <end position="182"/>
    </location>
</feature>
<feature type="helix" evidence="14">
    <location>
        <begin position="184"/>
        <end position="186"/>
    </location>
</feature>
<feature type="turn" evidence="14">
    <location>
        <begin position="187"/>
        <end position="191"/>
    </location>
</feature>
<feature type="helix" evidence="14">
    <location>
        <begin position="194"/>
        <end position="204"/>
    </location>
</feature>
<feature type="strand" evidence="14">
    <location>
        <begin position="210"/>
        <end position="212"/>
    </location>
</feature>
<feature type="helix" evidence="14">
    <location>
        <begin position="218"/>
        <end position="234"/>
    </location>
</feature>
<accession>O25560</accession>
<name>HYPB_HELPY</name>
<dbReference type="EMBL" id="AE000511">
    <property type="protein sequence ID" value="AAD07946.1"/>
    <property type="molecule type" value="Genomic_DNA"/>
</dbReference>
<dbReference type="PIR" id="D64632">
    <property type="entry name" value="D64632"/>
</dbReference>
<dbReference type="RefSeq" id="NP_207693.1">
    <property type="nucleotide sequence ID" value="NC_000915.1"/>
</dbReference>
<dbReference type="RefSeq" id="WP_000003622.1">
    <property type="nucleotide sequence ID" value="NC_018939.1"/>
</dbReference>
<dbReference type="PDB" id="4LPS">
    <property type="method" value="X-ray"/>
    <property type="resolution" value="2.00 A"/>
    <property type="chains" value="A/B=1-242"/>
</dbReference>
<dbReference type="PDBsum" id="4LPS"/>
<dbReference type="SMR" id="O25560"/>
<dbReference type="DIP" id="DIP-3235N"/>
<dbReference type="FunCoup" id="O25560">
    <property type="interactions" value="20"/>
</dbReference>
<dbReference type="IntAct" id="O25560">
    <property type="interactions" value="2"/>
</dbReference>
<dbReference type="MINT" id="O25560"/>
<dbReference type="STRING" id="85962.HP_0900"/>
<dbReference type="PaxDb" id="85962-C694_04620"/>
<dbReference type="EnsemblBacteria" id="AAD07946">
    <property type="protein sequence ID" value="AAD07946"/>
    <property type="gene ID" value="HP_0900"/>
</dbReference>
<dbReference type="KEGG" id="heo:C694_04620"/>
<dbReference type="KEGG" id="hpy:HP_0900"/>
<dbReference type="PATRIC" id="fig|85962.47.peg.959"/>
<dbReference type="eggNOG" id="COG0378">
    <property type="taxonomic scope" value="Bacteria"/>
</dbReference>
<dbReference type="InParanoid" id="O25560"/>
<dbReference type="OrthoDB" id="9802035at2"/>
<dbReference type="PhylomeDB" id="O25560"/>
<dbReference type="BioCyc" id="MetaCyc:HP_RS04400-MONOMER"/>
<dbReference type="EvolutionaryTrace" id="O25560"/>
<dbReference type="Proteomes" id="UP000000429">
    <property type="component" value="Chromosome"/>
</dbReference>
<dbReference type="GO" id="GO:0005525">
    <property type="term" value="F:GTP binding"/>
    <property type="evidence" value="ECO:0007669"/>
    <property type="project" value="UniProtKB-KW"/>
</dbReference>
<dbReference type="GO" id="GO:0003924">
    <property type="term" value="F:GTPase activity"/>
    <property type="evidence" value="ECO:0000318"/>
    <property type="project" value="GO_Central"/>
</dbReference>
<dbReference type="GO" id="GO:0016151">
    <property type="term" value="F:nickel cation binding"/>
    <property type="evidence" value="ECO:0000318"/>
    <property type="project" value="GO_Central"/>
</dbReference>
<dbReference type="GO" id="GO:0008270">
    <property type="term" value="F:zinc ion binding"/>
    <property type="evidence" value="ECO:0000318"/>
    <property type="project" value="GO_Central"/>
</dbReference>
<dbReference type="GO" id="GO:0051604">
    <property type="term" value="P:protein maturation"/>
    <property type="evidence" value="ECO:0000318"/>
    <property type="project" value="GO_Central"/>
</dbReference>
<dbReference type="CDD" id="cd05390">
    <property type="entry name" value="HypB"/>
    <property type="match status" value="1"/>
</dbReference>
<dbReference type="Gene3D" id="3.40.50.300">
    <property type="entry name" value="P-loop containing nucleotide triphosphate hydrolases"/>
    <property type="match status" value="1"/>
</dbReference>
<dbReference type="InterPro" id="IPR003495">
    <property type="entry name" value="CobW/HypB/UreG_nucleotide-bd"/>
</dbReference>
<dbReference type="InterPro" id="IPR004392">
    <property type="entry name" value="Hyd_mat_HypB"/>
</dbReference>
<dbReference type="InterPro" id="IPR027417">
    <property type="entry name" value="P-loop_NTPase"/>
</dbReference>
<dbReference type="NCBIfam" id="TIGR00073">
    <property type="entry name" value="hypB"/>
    <property type="match status" value="1"/>
</dbReference>
<dbReference type="PANTHER" id="PTHR30134:SF2">
    <property type="entry name" value="HYDROGENASE MATURATION FACTOR HYPB"/>
    <property type="match status" value="1"/>
</dbReference>
<dbReference type="PANTHER" id="PTHR30134">
    <property type="entry name" value="HYDROGENASE PROTEIN ASSEMBLY PROTEIN, NICKEL CHAPERONE"/>
    <property type="match status" value="1"/>
</dbReference>
<dbReference type="Pfam" id="PF02492">
    <property type="entry name" value="cobW"/>
    <property type="match status" value="1"/>
</dbReference>
<dbReference type="PIRSF" id="PIRSF005624">
    <property type="entry name" value="Ni-bind_GTPase"/>
    <property type="match status" value="1"/>
</dbReference>
<dbReference type="SUPFAM" id="SSF52540">
    <property type="entry name" value="P-loop containing nucleoside triphosphate hydrolases"/>
    <property type="match status" value="1"/>
</dbReference>
<reference key="1">
    <citation type="journal article" date="1997" name="Nature">
        <title>The complete genome sequence of the gastric pathogen Helicobacter pylori.</title>
        <authorList>
            <person name="Tomb J.-F."/>
            <person name="White O."/>
            <person name="Kerlavage A.R."/>
            <person name="Clayton R.A."/>
            <person name="Sutton G.G."/>
            <person name="Fleischmann R.D."/>
            <person name="Ketchum K.A."/>
            <person name="Klenk H.-P."/>
            <person name="Gill S.R."/>
            <person name="Dougherty B.A."/>
            <person name="Nelson K.E."/>
            <person name="Quackenbush J."/>
            <person name="Zhou L."/>
            <person name="Kirkness E.F."/>
            <person name="Peterson S.N."/>
            <person name="Loftus B.J."/>
            <person name="Richardson D.L."/>
            <person name="Dodson R.J."/>
            <person name="Khalak H.G."/>
            <person name="Glodek A."/>
            <person name="McKenney K."/>
            <person name="FitzGerald L.M."/>
            <person name="Lee N."/>
            <person name="Adams M.D."/>
            <person name="Hickey E.K."/>
            <person name="Berg D.E."/>
            <person name="Gocayne J.D."/>
            <person name="Utterback T.R."/>
            <person name="Peterson J.D."/>
            <person name="Kelley J.M."/>
            <person name="Cotton M.D."/>
            <person name="Weidman J.F."/>
            <person name="Fujii C."/>
            <person name="Bowman C."/>
            <person name="Watthey L."/>
            <person name="Wallin E."/>
            <person name="Hayes W.S."/>
            <person name="Borodovsky M."/>
            <person name="Karp P.D."/>
            <person name="Smith H.O."/>
            <person name="Fraser C.M."/>
            <person name="Venter J.C."/>
        </authorList>
    </citation>
    <scope>NUCLEOTIDE SEQUENCE [LARGE SCALE GENOMIC DNA]</scope>
    <source>
        <strain>ATCC 700392 / 26695</strain>
    </source>
</reference>
<reference key="2">
    <citation type="journal article" date="2001" name="Mol. Microbiol.">
        <title>Requirement of nickel metabolism proteins HypA and HypB for full activity of both hydrogenase and urease in Helicobacter pylori.</title>
        <authorList>
            <person name="Olson J.W."/>
            <person name="Mehta N.S."/>
            <person name="Maier R.J."/>
        </authorList>
    </citation>
    <scope>FUNCTION</scope>
    <scope>DISRUPTION PHENOTYPE</scope>
    <source>
        <strain>ATCC 43504 / NCTC 11637 / JCM 7653 / RPH 13487</strain>
    </source>
</reference>
<reference key="3">
    <citation type="journal article" date="2003" name="J. Bacteriol.">
        <title>Characterization of Helicobacter pylori nickel metabolism accessory proteins needed for maturation of both urease and hydrogenase.</title>
        <authorList>
            <person name="Mehta N."/>
            <person name="Olson J.W."/>
            <person name="Maier R.J."/>
        </authorList>
    </citation>
    <scope>FUNCTION</scope>
    <scope>SUBUNIT</scope>
    <scope>INTERACTION WITH HYPA</scope>
    <scope>MUTAGENESIS OF LYS-59</scope>
    <source>
        <strain>ATCC 43504</strain>
    </source>
</reference>
<reference key="4">
    <citation type="journal article" date="2003" name="Microb. Pathog.">
        <title>Roles of conserved nucleotide-binding domains in accessory proteins, HypB and UreG, in the maturation of nickel-enzymes required for efficient Helicobacter pylori colonization.</title>
        <authorList>
            <person name="Mehta N."/>
            <person name="Benoit S."/>
            <person name="Maier R.J."/>
        </authorList>
    </citation>
    <scope>MUTAGENESIS OF LYS-59</scope>
    <source>
        <strain>ATCC 43504 / NCTC 11637 / JCM 7653 / RPH 13487</strain>
    </source>
</reference>
<reference key="5">
    <citation type="journal article" date="2011" name="J. Bacteriol.">
        <title>Effects of metal on the biochemical properties of Helicobacter pylori HypB, a maturation factor of [NiFe]-hydrogenase and urease.</title>
        <authorList>
            <person name="Sydor A.M."/>
            <person name="Liu J."/>
            <person name="Zamble D.B."/>
        </authorList>
    </citation>
    <scope>FUNCTION</scope>
    <scope>ACTIVITY REGULATION</scope>
    <scope>BIOPHYSICOCHEMICAL PROPERTIES</scope>
    <scope>SUBUNIT</scope>
    <scope>DOMAIN</scope>
    <scope>NICKEL-BINDING</scope>
    <scope>ZINC-BINDING</scope>
    <scope>MUTAGENESIS OF 106-CYS-HIS-107</scope>
    <source>
        <strain>ATCC 700392 / 26695</strain>
    </source>
</reference>
<reference key="6">
    <citation type="journal article" date="2012" name="J. Biol. Chem.">
        <title>Metallo-GTPase HypB from Helicobacter pylori and its interaction with nickel chaperone protein HypA.</title>
        <authorList>
            <person name="Xia W."/>
            <person name="Li H."/>
            <person name="Yang X."/>
            <person name="Wong K.B."/>
            <person name="Sun H."/>
        </authorList>
    </citation>
    <scope>FUNCTION</scope>
    <scope>SUBUNIT</scope>
    <scope>INTERACTION WITH HYPA</scope>
    <scope>MUTAGENESIS OF LYS-18; VAL-20; LYS-21; ILE-22; LYS-168; MET-186 AND PHE-190</scope>
    <source>
        <strain>ATCC 700392 / 26695</strain>
    </source>
</reference>
<reference evidence="13" key="7">
    <citation type="journal article" date="2014" name="J. Biol. Chem.">
        <title>Relationship between Ni(II) and Zn(II) coordination and nucleotide binding by the Helicobacter pylori [NiFe]-hydrogenase and urease maturation factor HypB.</title>
        <authorList>
            <person name="Sydor A.M."/>
            <person name="Lebrette H."/>
            <person name="Ariyakumaran R."/>
            <person name="Cavazza C."/>
            <person name="Zamble D.B."/>
        </authorList>
    </citation>
    <scope>X-RAY CRYSTALLOGRAPHY (2.00 ANGSTROMS) IN COMPLEX WITH NICKEL</scope>
    <scope>FUNCTION</scope>
    <scope>ACTIVITY REGULATION</scope>
    <scope>SUBUNIT</scope>
    <scope>DOMAIN</scope>
    <scope>MUTAGENESIS OF HIS-107 AND CYS-142</scope>
</reference>
<keyword id="KW-0002">3D-structure</keyword>
<keyword id="KW-0342">GTP-binding</keyword>
<keyword id="KW-0378">Hydrolase</keyword>
<keyword id="KW-0479">Metal-binding</keyword>
<keyword id="KW-0533">Nickel</keyword>
<keyword id="KW-0547">Nucleotide-binding</keyword>
<keyword id="KW-1185">Reference proteome</keyword>
<keyword id="KW-0862">Zinc</keyword>
<comment type="function">
    <text evidence="3 5 6 7 9 10">Involved in the maturation of [NiFe] hydrogenases. Required for nickel insertion into the metal center of the hydrogenase. Is also required for maturation of urease (PubMed:11123699, PubMed:12533448). Exhibits a low intrinsic GTPase activity, which is essential for nickel insertion (PubMed:12533448, PubMed:21239585, PubMed:22179820, PubMed:24338018).</text>
</comment>
<comment type="activity regulation">
    <text evidence="5 7">Metal coordination and the nucleotide-bound state of HypB directly influence each other (PubMed:24338018). Binding of nickel in the G-domain decreases GTPase activity and modulates the oligomeric state of the protein (PubMed:21239585, PubMed:24338018). Binding of zinc inhibits the GTPase activity (PubMed:21239585, PubMed:24338018). GTP and GDP modulate coordination, stoichiometry, and affinity of nickel, but not zinc (PubMed:24338018). Potassium increases the GTPase activity but has no effect on the other biochemical properties of the protein (PubMed:24338018).</text>
</comment>
<comment type="biophysicochemical properties">
    <kinetics>
        <KM evidence="5">0.05 mM for GTP (apo form)</KM>
        <KM evidence="5">0.16 mM for GTP (in the presence of 20 uM Ni(II))</KM>
        <text evidence="5">kcat is 0.0006 sec(-1) for the apo form. kcat is 0.0016 sec(-1) in the presence of 20 uM Ni(II).</text>
    </kinetics>
</comment>
<comment type="subunit">
    <text evidence="3 5 6 7">Monomer and homodimer (PubMed:12533448, PubMed:21239585, PubMed:22179820, PubMed:24338018). Dimerization is induced by nickel, but not by zinc (PubMed:21239585). Dimerization is also induced by GTP (PubMed:22179820). Forms complexes with HypA (PubMed:12533448, PubMed:22179820).</text>
</comment>
<comment type="domain">
    <text evidence="5 7">Contains a metal-binding site, which can bind nickel or zinc, with a higher affinity for zinc (PubMed:21239585). His-107 is an essential nickel ligand only in the nucleotide-free state of the protein (PubMed:24338018).</text>
</comment>
<comment type="disruption phenotype">
    <text evidence="2">Mutant has negligible hydrogenase activity and is severely impaired in urease activity.</text>
</comment>
<comment type="similarity">
    <text evidence="8">Belongs to the SIMIBI class G3E GTPase family. HypB/HupM subfamily.</text>
</comment>
<organism>
    <name type="scientific">Helicobacter pylori (strain ATCC 700392 / 26695)</name>
    <name type="common">Campylobacter pylori</name>
    <dbReference type="NCBI Taxonomy" id="85962"/>
    <lineage>
        <taxon>Bacteria</taxon>
        <taxon>Pseudomonadati</taxon>
        <taxon>Campylobacterota</taxon>
        <taxon>Epsilonproteobacteria</taxon>
        <taxon>Campylobacterales</taxon>
        <taxon>Helicobacteraceae</taxon>
        <taxon>Helicobacter</taxon>
    </lineage>
</organism>
<gene>
    <name type="primary">hypB</name>
    <name type="ordered locus">HP_0900</name>
</gene>